<gene>
    <name evidence="1" type="primary">rsmA</name>
    <name evidence="1" type="synonym">ksgA</name>
    <name type="ordered locus">Mmcs_4263</name>
</gene>
<evidence type="ECO:0000255" key="1">
    <source>
        <dbReference type="HAMAP-Rule" id="MF_00607"/>
    </source>
</evidence>
<protein>
    <recommendedName>
        <fullName evidence="1">Ribosomal RNA small subunit methyltransferase A</fullName>
        <ecNumber evidence="1">2.1.1.182</ecNumber>
    </recommendedName>
    <alternativeName>
        <fullName evidence="1">16S rRNA (adenine(1518)-N(6)/adenine(1519)-N(6))-dimethyltransferase</fullName>
    </alternativeName>
    <alternativeName>
        <fullName evidence="1">16S rRNA dimethyladenosine transferase</fullName>
    </alternativeName>
    <alternativeName>
        <fullName evidence="1">16S rRNA dimethylase</fullName>
    </alternativeName>
    <alternativeName>
        <fullName evidence="1">S-adenosylmethionine-6-N', N'-adenosyl(rRNA) dimethyltransferase</fullName>
    </alternativeName>
</protein>
<proteinExistence type="inferred from homology"/>
<reference key="1">
    <citation type="submission" date="2006-06" db="EMBL/GenBank/DDBJ databases">
        <title>Complete sequence of chromosome of Mycobacterium sp. MCS.</title>
        <authorList>
            <consortium name="US DOE Joint Genome Institute"/>
            <person name="Copeland A."/>
            <person name="Lucas S."/>
            <person name="Lapidus A."/>
            <person name="Barry K."/>
            <person name="Detter J.C."/>
            <person name="Glavina del Rio T."/>
            <person name="Hammon N."/>
            <person name="Israni S."/>
            <person name="Dalin E."/>
            <person name="Tice H."/>
            <person name="Pitluck S."/>
            <person name="Martinez M."/>
            <person name="Schmutz J."/>
            <person name="Larimer F."/>
            <person name="Land M."/>
            <person name="Hauser L."/>
            <person name="Kyrpides N."/>
            <person name="Kim E."/>
            <person name="Miller C.D."/>
            <person name="Hughes J.E."/>
            <person name="Anderson A.J."/>
            <person name="Sims R.C."/>
            <person name="Richardson P."/>
        </authorList>
    </citation>
    <scope>NUCLEOTIDE SEQUENCE [LARGE SCALE GENOMIC DNA]</scope>
    <source>
        <strain>MCS</strain>
    </source>
</reference>
<accession>Q1B416</accession>
<name>RSMA_MYCSS</name>
<organism>
    <name type="scientific">Mycobacterium sp. (strain MCS)</name>
    <dbReference type="NCBI Taxonomy" id="164756"/>
    <lineage>
        <taxon>Bacteria</taxon>
        <taxon>Bacillati</taxon>
        <taxon>Actinomycetota</taxon>
        <taxon>Actinomycetes</taxon>
        <taxon>Mycobacteriales</taxon>
        <taxon>Mycobacteriaceae</taxon>
        <taxon>Mycobacterium</taxon>
    </lineage>
</organism>
<keyword id="KW-0963">Cytoplasm</keyword>
<keyword id="KW-0489">Methyltransferase</keyword>
<keyword id="KW-0694">RNA-binding</keyword>
<keyword id="KW-0698">rRNA processing</keyword>
<keyword id="KW-0949">S-adenosyl-L-methionine</keyword>
<keyword id="KW-0808">Transferase</keyword>
<feature type="chain" id="PRO_1000130298" description="Ribosomal RNA small subunit methyltransferase A">
    <location>
        <begin position="1"/>
        <end position="294"/>
    </location>
</feature>
<feature type="binding site" evidence="1">
    <location>
        <position position="29"/>
    </location>
    <ligand>
        <name>S-adenosyl-L-methionine</name>
        <dbReference type="ChEBI" id="CHEBI:59789"/>
    </ligand>
</feature>
<feature type="binding site" evidence="1">
    <location>
        <position position="31"/>
    </location>
    <ligand>
        <name>S-adenosyl-L-methionine</name>
        <dbReference type="ChEBI" id="CHEBI:59789"/>
    </ligand>
</feature>
<feature type="binding site" evidence="1">
    <location>
        <position position="56"/>
    </location>
    <ligand>
        <name>S-adenosyl-L-methionine</name>
        <dbReference type="ChEBI" id="CHEBI:59789"/>
    </ligand>
</feature>
<feature type="binding site" evidence="1">
    <location>
        <position position="77"/>
    </location>
    <ligand>
        <name>S-adenosyl-L-methionine</name>
        <dbReference type="ChEBI" id="CHEBI:59789"/>
    </ligand>
</feature>
<feature type="binding site" evidence="1">
    <location>
        <position position="107"/>
    </location>
    <ligand>
        <name>S-adenosyl-L-methionine</name>
        <dbReference type="ChEBI" id="CHEBI:59789"/>
    </ligand>
</feature>
<feature type="binding site" evidence="1">
    <location>
        <position position="126"/>
    </location>
    <ligand>
        <name>S-adenosyl-L-methionine</name>
        <dbReference type="ChEBI" id="CHEBI:59789"/>
    </ligand>
</feature>
<sequence>MTIRLLGRTEIRRLAKDIDFRPRKSFGQNFVHDANTVRRIVSASGVHRHDHVLKVGPGLGSLTLALLDRGAHVTAVEIDPLLAQQLPTTIADHSHSEINRLTVLNQDILTLMPSDLENQPTALVANLPYNVAVPALLHLLAEFPTIRSVMVMVQAEVAERLAADPGGKDYGVPSAKVRFYGNVRRYGMVSPTVFWPIPRVYSGLVRIDRYETSPWPTDADFRAQVFDLIDIAFAQRRKTSRNAFAEWAGSGNESARRLLAASIDPSRRGETLAIADFVRLLQRSGEAEEQVRVQ</sequence>
<comment type="function">
    <text evidence="1">Specifically dimethylates two adjacent adenosines (A1518 and A1519) in the loop of a conserved hairpin near the 3'-end of 16S rRNA in the 30S particle. May play a critical role in biogenesis of 30S subunits.</text>
</comment>
<comment type="catalytic activity">
    <reaction evidence="1">
        <text>adenosine(1518)/adenosine(1519) in 16S rRNA + 4 S-adenosyl-L-methionine = N(6)-dimethyladenosine(1518)/N(6)-dimethyladenosine(1519) in 16S rRNA + 4 S-adenosyl-L-homocysteine + 4 H(+)</text>
        <dbReference type="Rhea" id="RHEA:19609"/>
        <dbReference type="Rhea" id="RHEA-COMP:10232"/>
        <dbReference type="Rhea" id="RHEA-COMP:10233"/>
        <dbReference type="ChEBI" id="CHEBI:15378"/>
        <dbReference type="ChEBI" id="CHEBI:57856"/>
        <dbReference type="ChEBI" id="CHEBI:59789"/>
        <dbReference type="ChEBI" id="CHEBI:74411"/>
        <dbReference type="ChEBI" id="CHEBI:74493"/>
        <dbReference type="EC" id="2.1.1.182"/>
    </reaction>
</comment>
<comment type="subcellular location">
    <subcellularLocation>
        <location evidence="1">Cytoplasm</location>
    </subcellularLocation>
</comment>
<comment type="similarity">
    <text evidence="1">Belongs to the class I-like SAM-binding methyltransferase superfamily. rRNA adenine N(6)-methyltransferase family. RsmA subfamily.</text>
</comment>
<dbReference type="EC" id="2.1.1.182" evidence="1"/>
<dbReference type="EMBL" id="CP000384">
    <property type="protein sequence ID" value="ABG10368.1"/>
    <property type="molecule type" value="Genomic_DNA"/>
</dbReference>
<dbReference type="SMR" id="Q1B416"/>
<dbReference type="KEGG" id="mmc:Mmcs_4263"/>
<dbReference type="HOGENOM" id="CLU_041220_1_1_11"/>
<dbReference type="BioCyc" id="MSP164756:G1G6O-4354-MONOMER"/>
<dbReference type="GO" id="GO:0005829">
    <property type="term" value="C:cytosol"/>
    <property type="evidence" value="ECO:0007669"/>
    <property type="project" value="TreeGrafter"/>
</dbReference>
<dbReference type="GO" id="GO:0052908">
    <property type="term" value="F:16S rRNA (adenine(1518)-N(6)/adenine(1519)-N(6))-dimethyltransferase activity"/>
    <property type="evidence" value="ECO:0007669"/>
    <property type="project" value="UniProtKB-EC"/>
</dbReference>
<dbReference type="GO" id="GO:0003723">
    <property type="term" value="F:RNA binding"/>
    <property type="evidence" value="ECO:0007669"/>
    <property type="project" value="UniProtKB-KW"/>
</dbReference>
<dbReference type="CDD" id="cd02440">
    <property type="entry name" value="AdoMet_MTases"/>
    <property type="match status" value="1"/>
</dbReference>
<dbReference type="FunFam" id="1.10.8.100:FF:000003">
    <property type="entry name" value="Ribosomal RNA small subunit methyltransferase A"/>
    <property type="match status" value="1"/>
</dbReference>
<dbReference type="FunFam" id="3.40.50.150:FF:000023">
    <property type="entry name" value="Ribosomal RNA small subunit methyltransferase A"/>
    <property type="match status" value="1"/>
</dbReference>
<dbReference type="Gene3D" id="1.10.8.100">
    <property type="entry name" value="Ribosomal RNA adenine dimethylase-like, domain 2"/>
    <property type="match status" value="1"/>
</dbReference>
<dbReference type="Gene3D" id="3.40.50.150">
    <property type="entry name" value="Vaccinia Virus protein VP39"/>
    <property type="match status" value="1"/>
</dbReference>
<dbReference type="HAMAP" id="MF_00607">
    <property type="entry name" value="16SrRNA_methyltr_A"/>
    <property type="match status" value="1"/>
</dbReference>
<dbReference type="InterPro" id="IPR001737">
    <property type="entry name" value="KsgA/Erm"/>
</dbReference>
<dbReference type="InterPro" id="IPR023165">
    <property type="entry name" value="rRNA_Ade_diMease-like_C"/>
</dbReference>
<dbReference type="InterPro" id="IPR020598">
    <property type="entry name" value="rRNA_Ade_methylase_Trfase_N"/>
</dbReference>
<dbReference type="InterPro" id="IPR011530">
    <property type="entry name" value="rRNA_adenine_dimethylase"/>
</dbReference>
<dbReference type="InterPro" id="IPR029063">
    <property type="entry name" value="SAM-dependent_MTases_sf"/>
</dbReference>
<dbReference type="NCBIfam" id="TIGR00755">
    <property type="entry name" value="ksgA"/>
    <property type="match status" value="1"/>
</dbReference>
<dbReference type="PANTHER" id="PTHR11727">
    <property type="entry name" value="DIMETHYLADENOSINE TRANSFERASE"/>
    <property type="match status" value="1"/>
</dbReference>
<dbReference type="PANTHER" id="PTHR11727:SF7">
    <property type="entry name" value="DIMETHYLADENOSINE TRANSFERASE-RELATED"/>
    <property type="match status" value="1"/>
</dbReference>
<dbReference type="Pfam" id="PF00398">
    <property type="entry name" value="RrnaAD"/>
    <property type="match status" value="1"/>
</dbReference>
<dbReference type="SMART" id="SM00650">
    <property type="entry name" value="rADc"/>
    <property type="match status" value="1"/>
</dbReference>
<dbReference type="SUPFAM" id="SSF53335">
    <property type="entry name" value="S-adenosyl-L-methionine-dependent methyltransferases"/>
    <property type="match status" value="1"/>
</dbReference>
<dbReference type="PROSITE" id="PS51689">
    <property type="entry name" value="SAM_RNA_A_N6_MT"/>
    <property type="match status" value="1"/>
</dbReference>